<gene>
    <name type="primary">DDR1</name>
    <name type="synonym">EDDR1</name>
</gene>
<accession>Q7YR43</accession>
<sequence length="909" mass="100642">MGPEALSSLLLLLLVASGDADMKGHFDPAKCRYALGMQDRTIPDSDISASSSWSDSTAARHSSDGDGAWCPAGSVFPKEEEYLQVDLQRLHLVALVGTQGRHAGGLGKEFSRSYRLRYSRDGRRWMGWKDRWGQEVISGNEDPEGVVLKDLGPPMVARLVRFYPRADRVMSVCLRVELYGCLWRDGLLSYTAPVGQTMYLSEAVYLNDSTYDGHTVGGLQYGGLGQLADGVVGLDDFRKSQELRVWPGYDYVGWSNHSFSSGYVEMEFEFDRLRAFQAMQVHCNNMHTLGARLPGGVECRFRRGPAMAWEGEPMRHNLGGNLGDPRARAVSVPLGGRVARFLQCRFLFAGPWLLFSEISFISDVVNNSSPALGGTFPPAPWWPPGPPPTNFSSLELEPRGQQPVAKAEGSPTAILIGCLVAIILLLLLIIALMLWRLHWRRLLSKAERRVLEEELTVHLSVPGDTILINNRPGPREPPPYQEPRPRGNPPHSAPCVPNGSALLLSNPAYRLLLATYARPPRGPGPPTPAWAKPTNTQAYSGDYMEPEKPGAPLLPPPPQNSVPHYAEADIVTLQGVTGGNTYAVPALPPGAVGDGPPRVDFPRSRLRFKEKLGEGQFGEVHLCEVDSPQDLVSLDFPLNVRKGHPLLVAVKILRPDATKNARNDFLKEVKIMSRLKDPNIIRLLGVCVQDDPLCMITDYMENGDLNQFLSAHQLEDKAAEGAPGDGQAAQGPTISYPMLLHVAAQIASGMRYLATLNFVHRDLATRNCLVGENFTIKIADFGMSRNLYAGDYYRVQGRAVLPIRWMAWECILMGKFTTASDVWAFGVTLWEVLMLCRAQPFGQLTDEQVIENAGEFFRDQGRQVYLSRPPACPQGLYELMLRCWSRESEQRPPFSQLHRFLAEDALNTV</sequence>
<keyword id="KW-0067">ATP-binding</keyword>
<keyword id="KW-0106">Calcium</keyword>
<keyword id="KW-1003">Cell membrane</keyword>
<keyword id="KW-1015">Disulfide bond</keyword>
<keyword id="KW-0325">Glycoprotein</keyword>
<keyword id="KW-0418">Kinase</keyword>
<keyword id="KW-0421">Lactation</keyword>
<keyword id="KW-0472">Membrane</keyword>
<keyword id="KW-0479">Metal-binding</keyword>
<keyword id="KW-0547">Nucleotide-binding</keyword>
<keyword id="KW-0597">Phosphoprotein</keyword>
<keyword id="KW-0635">Pregnancy</keyword>
<keyword id="KW-0675">Receptor</keyword>
<keyword id="KW-1185">Reference proteome</keyword>
<keyword id="KW-0732">Signal</keyword>
<keyword id="KW-0808">Transferase</keyword>
<keyword id="KW-0812">Transmembrane</keyword>
<keyword id="KW-1133">Transmembrane helix</keyword>
<keyword id="KW-0829">Tyrosine-protein kinase</keyword>
<proteinExistence type="inferred from homology"/>
<dbReference type="EC" id="2.7.10.1"/>
<dbReference type="EMBL" id="BA000041">
    <property type="protein sequence ID" value="BAC78172.1"/>
    <property type="molecule type" value="Genomic_DNA"/>
</dbReference>
<dbReference type="RefSeq" id="NP_001038967.1">
    <property type="nucleotide sequence ID" value="NM_001045502.1"/>
</dbReference>
<dbReference type="SMR" id="Q7YR43"/>
<dbReference type="FunCoup" id="Q7YR43">
    <property type="interactions" value="54"/>
</dbReference>
<dbReference type="STRING" id="9598.ENSPTRP00000069688"/>
<dbReference type="GlyCosmos" id="Q7YR43">
    <property type="glycosylation" value="4 sites, No reported glycans"/>
</dbReference>
<dbReference type="PaxDb" id="9598-ENSPTRP00000030612"/>
<dbReference type="GeneID" id="462548"/>
<dbReference type="KEGG" id="ptr:462548"/>
<dbReference type="CTD" id="780"/>
<dbReference type="eggNOG" id="KOG1094">
    <property type="taxonomic scope" value="Eukaryota"/>
</dbReference>
<dbReference type="HOGENOM" id="CLU_008873_2_0_1"/>
<dbReference type="InParanoid" id="Q7YR43"/>
<dbReference type="TreeFam" id="TF317840"/>
<dbReference type="Proteomes" id="UP000002277">
    <property type="component" value="Unplaced"/>
</dbReference>
<dbReference type="GO" id="GO:0005886">
    <property type="term" value="C:plasma membrane"/>
    <property type="evidence" value="ECO:0000318"/>
    <property type="project" value="GO_Central"/>
</dbReference>
<dbReference type="GO" id="GO:0043235">
    <property type="term" value="C:receptor complex"/>
    <property type="evidence" value="ECO:0000318"/>
    <property type="project" value="GO_Central"/>
</dbReference>
<dbReference type="GO" id="GO:0005524">
    <property type="term" value="F:ATP binding"/>
    <property type="evidence" value="ECO:0007669"/>
    <property type="project" value="UniProtKB-KW"/>
</dbReference>
<dbReference type="GO" id="GO:0005518">
    <property type="term" value="F:collagen binding"/>
    <property type="evidence" value="ECO:0000250"/>
    <property type="project" value="UniProtKB"/>
</dbReference>
<dbReference type="GO" id="GO:0046872">
    <property type="term" value="F:metal ion binding"/>
    <property type="evidence" value="ECO:0007669"/>
    <property type="project" value="UniProtKB-KW"/>
</dbReference>
<dbReference type="GO" id="GO:0038062">
    <property type="term" value="F:protein tyrosine kinase collagen receptor activity"/>
    <property type="evidence" value="ECO:0000250"/>
    <property type="project" value="UniProtKB"/>
</dbReference>
<dbReference type="GO" id="GO:0007169">
    <property type="term" value="P:cell surface receptor protein tyrosine kinase signaling pathway"/>
    <property type="evidence" value="ECO:0000318"/>
    <property type="project" value="GO_Central"/>
</dbReference>
<dbReference type="GO" id="GO:0038063">
    <property type="term" value="P:collagen-activated tyrosine kinase receptor signaling pathway"/>
    <property type="evidence" value="ECO:0000250"/>
    <property type="project" value="UniProtKB"/>
</dbReference>
<dbReference type="GO" id="GO:0007565">
    <property type="term" value="P:female pregnancy"/>
    <property type="evidence" value="ECO:0007669"/>
    <property type="project" value="UniProtKB-KW"/>
</dbReference>
<dbReference type="GO" id="GO:0007595">
    <property type="term" value="P:lactation"/>
    <property type="evidence" value="ECO:0007669"/>
    <property type="project" value="UniProtKB-KW"/>
</dbReference>
<dbReference type="GO" id="GO:0038083">
    <property type="term" value="P:peptidyl-tyrosine autophosphorylation"/>
    <property type="evidence" value="ECO:0000250"/>
    <property type="project" value="UniProtKB"/>
</dbReference>
<dbReference type="GO" id="GO:0010976">
    <property type="term" value="P:positive regulation of neuron projection development"/>
    <property type="evidence" value="ECO:0000318"/>
    <property type="project" value="GO_Central"/>
</dbReference>
<dbReference type="GO" id="GO:0051897">
    <property type="term" value="P:positive regulation of phosphatidylinositol 3-kinase/protein kinase B signal transduction"/>
    <property type="evidence" value="ECO:0000318"/>
    <property type="project" value="GO_Central"/>
</dbReference>
<dbReference type="GO" id="GO:0010715">
    <property type="term" value="P:regulation of extracellular matrix disassembly"/>
    <property type="evidence" value="ECO:0000250"/>
    <property type="project" value="UniProtKB"/>
</dbReference>
<dbReference type="GO" id="GO:0014909">
    <property type="term" value="P:smooth muscle cell migration"/>
    <property type="evidence" value="ECO:0000250"/>
    <property type="project" value="UniProtKB"/>
</dbReference>
<dbReference type="GO" id="GO:0061302">
    <property type="term" value="P:smooth muscle cell-matrix adhesion"/>
    <property type="evidence" value="ECO:0000250"/>
    <property type="project" value="UniProtKB"/>
</dbReference>
<dbReference type="GO" id="GO:0044319">
    <property type="term" value="P:wound healing, spreading of cells"/>
    <property type="evidence" value="ECO:0000250"/>
    <property type="project" value="UniProtKB"/>
</dbReference>
<dbReference type="CDD" id="cd00057">
    <property type="entry name" value="FA58C"/>
    <property type="match status" value="1"/>
</dbReference>
<dbReference type="CDD" id="cd05096">
    <property type="entry name" value="PTKc_DDR1"/>
    <property type="match status" value="1"/>
</dbReference>
<dbReference type="FunFam" id="2.60.120.260:FF:000007">
    <property type="entry name" value="Discoidin domain receptor tyrosine kinase 1"/>
    <property type="match status" value="1"/>
</dbReference>
<dbReference type="FunFam" id="1.10.510.10:FF:000053">
    <property type="entry name" value="Epithelial discoidin domain-containing receptor 1"/>
    <property type="match status" value="1"/>
</dbReference>
<dbReference type="FunFam" id="3.30.200.20:FF:000082">
    <property type="entry name" value="Epithelial discoidin domain-containing receptor 1"/>
    <property type="match status" value="1"/>
</dbReference>
<dbReference type="FunFam" id="2.60.120.1190:FF:000002">
    <property type="entry name" value="epithelial discoidin domain-containing receptor 1"/>
    <property type="match status" value="1"/>
</dbReference>
<dbReference type="Gene3D" id="2.60.120.1190">
    <property type="match status" value="1"/>
</dbReference>
<dbReference type="Gene3D" id="2.60.120.260">
    <property type="entry name" value="Galactose-binding domain-like"/>
    <property type="match status" value="1"/>
</dbReference>
<dbReference type="Gene3D" id="3.30.200.20">
    <property type="entry name" value="Phosphorylase Kinase, domain 1"/>
    <property type="match status" value="1"/>
</dbReference>
<dbReference type="Gene3D" id="1.10.510.10">
    <property type="entry name" value="Transferase(Phosphotransferase) domain 1"/>
    <property type="match status" value="1"/>
</dbReference>
<dbReference type="InterPro" id="IPR048525">
    <property type="entry name" value="DDR1-2_DS-like"/>
</dbReference>
<dbReference type="InterPro" id="IPR000421">
    <property type="entry name" value="FA58C"/>
</dbReference>
<dbReference type="InterPro" id="IPR008979">
    <property type="entry name" value="Galactose-bd-like_sf"/>
</dbReference>
<dbReference type="InterPro" id="IPR011009">
    <property type="entry name" value="Kinase-like_dom_sf"/>
</dbReference>
<dbReference type="InterPro" id="IPR000719">
    <property type="entry name" value="Prot_kinase_dom"/>
</dbReference>
<dbReference type="InterPro" id="IPR050122">
    <property type="entry name" value="RTK"/>
</dbReference>
<dbReference type="InterPro" id="IPR001245">
    <property type="entry name" value="Ser-Thr/Tyr_kinase_cat_dom"/>
</dbReference>
<dbReference type="InterPro" id="IPR008266">
    <property type="entry name" value="Tyr_kinase_AS"/>
</dbReference>
<dbReference type="InterPro" id="IPR020635">
    <property type="entry name" value="Tyr_kinase_cat_dom"/>
</dbReference>
<dbReference type="InterPro" id="IPR002011">
    <property type="entry name" value="Tyr_kinase_rcpt_2_CS"/>
</dbReference>
<dbReference type="PANTHER" id="PTHR24416:SF333">
    <property type="entry name" value="EPITHELIAL DISCOIDIN DOMAIN-CONTAINING RECEPTOR 1"/>
    <property type="match status" value="1"/>
</dbReference>
<dbReference type="PANTHER" id="PTHR24416">
    <property type="entry name" value="TYROSINE-PROTEIN KINASE RECEPTOR"/>
    <property type="match status" value="1"/>
</dbReference>
<dbReference type="Pfam" id="PF21114">
    <property type="entry name" value="DDR1-2_DS-like"/>
    <property type="match status" value="1"/>
</dbReference>
<dbReference type="Pfam" id="PF00754">
    <property type="entry name" value="F5_F8_type_C"/>
    <property type="match status" value="1"/>
</dbReference>
<dbReference type="Pfam" id="PF07714">
    <property type="entry name" value="PK_Tyr_Ser-Thr"/>
    <property type="match status" value="1"/>
</dbReference>
<dbReference type="PRINTS" id="PR00109">
    <property type="entry name" value="TYRKINASE"/>
</dbReference>
<dbReference type="SMART" id="SM00231">
    <property type="entry name" value="FA58C"/>
    <property type="match status" value="1"/>
</dbReference>
<dbReference type="SMART" id="SM00219">
    <property type="entry name" value="TyrKc"/>
    <property type="match status" value="1"/>
</dbReference>
<dbReference type="SUPFAM" id="SSF49785">
    <property type="entry name" value="Galactose-binding domain-like"/>
    <property type="match status" value="1"/>
</dbReference>
<dbReference type="SUPFAM" id="SSF56112">
    <property type="entry name" value="Protein kinase-like (PK-like)"/>
    <property type="match status" value="1"/>
</dbReference>
<dbReference type="PROSITE" id="PS01285">
    <property type="entry name" value="FA58C_1"/>
    <property type="match status" value="1"/>
</dbReference>
<dbReference type="PROSITE" id="PS01286">
    <property type="entry name" value="FA58C_2"/>
    <property type="match status" value="1"/>
</dbReference>
<dbReference type="PROSITE" id="PS50022">
    <property type="entry name" value="FA58C_3"/>
    <property type="match status" value="1"/>
</dbReference>
<dbReference type="PROSITE" id="PS50011">
    <property type="entry name" value="PROTEIN_KINASE_DOM"/>
    <property type="match status" value="1"/>
</dbReference>
<dbReference type="PROSITE" id="PS00109">
    <property type="entry name" value="PROTEIN_KINASE_TYR"/>
    <property type="match status" value="1"/>
</dbReference>
<dbReference type="PROSITE" id="PS00239">
    <property type="entry name" value="RECEPTOR_TYR_KIN_II"/>
    <property type="match status" value="1"/>
</dbReference>
<reference key="1">
    <citation type="journal article" date="2003" name="Proc. Natl. Acad. Sci. U.S.A.">
        <title>Comparative sequencing of human and chimpanzee MHC class I regions unveils insertions/deletions as the major path to genomic divergence.</title>
        <authorList>
            <person name="Anzai T."/>
            <person name="Shiina T."/>
            <person name="Kimura N."/>
            <person name="Yanagiya K."/>
            <person name="Kohara S."/>
            <person name="Shigenari A."/>
            <person name="Yamagata T."/>
            <person name="Kulski J.K."/>
            <person name="Naruse T.K."/>
            <person name="Fujimori Y."/>
            <person name="Fukuzumi Y."/>
            <person name="Yamazaki M."/>
            <person name="Tashiro H."/>
            <person name="Iwamoto C."/>
            <person name="Umehara Y."/>
            <person name="Imanishi T."/>
            <person name="Meyer A."/>
            <person name="Ikeo K."/>
            <person name="Gojobori T."/>
            <person name="Bahram S."/>
            <person name="Inoko H."/>
        </authorList>
    </citation>
    <scope>NUCLEOTIDE SEQUENCE [LARGE SCALE GENOMIC DNA]</scope>
</reference>
<feature type="signal peptide" evidence="3">
    <location>
        <begin position="1"/>
        <end position="18"/>
    </location>
</feature>
<feature type="chain" id="PRO_0000016744" description="Epithelial discoidin domain-containing receptor 1">
    <location>
        <begin position="19"/>
        <end position="909"/>
    </location>
</feature>
<feature type="topological domain" description="Extracellular" evidence="3">
    <location>
        <begin position="21"/>
        <end position="413"/>
    </location>
</feature>
<feature type="transmembrane region" description="Helical" evidence="3">
    <location>
        <begin position="414"/>
        <end position="434"/>
    </location>
</feature>
<feature type="topological domain" description="Cytoplasmic" evidence="3">
    <location>
        <begin position="435"/>
        <end position="909"/>
    </location>
</feature>
<feature type="domain" description="F5/8 type C" evidence="4">
    <location>
        <begin position="31"/>
        <end position="181"/>
    </location>
</feature>
<feature type="domain" description="Protein kinase" evidence="5">
    <location>
        <begin position="606"/>
        <end position="901"/>
    </location>
</feature>
<feature type="region of interest" description="Disordered" evidence="7">
    <location>
        <begin position="45"/>
        <end position="65"/>
    </location>
</feature>
<feature type="region of interest" description="DS-like domain" evidence="1">
    <location>
        <begin position="188"/>
        <end position="363"/>
    </location>
</feature>
<feature type="region of interest" description="Disordered" evidence="7">
    <location>
        <begin position="466"/>
        <end position="495"/>
    </location>
</feature>
<feature type="short sequence motif" description="PPxY motif">
    <location>
        <begin position="477"/>
        <end position="480"/>
    </location>
</feature>
<feature type="compositionally biased region" description="Low complexity" evidence="7">
    <location>
        <begin position="45"/>
        <end position="60"/>
    </location>
</feature>
<feature type="compositionally biased region" description="Pro residues" evidence="7">
    <location>
        <begin position="475"/>
        <end position="492"/>
    </location>
</feature>
<feature type="active site" description="Proton acceptor" evidence="5 6">
    <location>
        <position position="762"/>
    </location>
</feature>
<feature type="binding site" evidence="1">
    <location>
        <position position="207"/>
    </location>
    <ligand>
        <name>Ca(2+)</name>
        <dbReference type="ChEBI" id="CHEBI:29108"/>
        <label>1</label>
    </ligand>
</feature>
<feature type="binding site" evidence="1">
    <location>
        <position position="226"/>
    </location>
    <ligand>
        <name>Ca(2+)</name>
        <dbReference type="ChEBI" id="CHEBI:29108"/>
        <label>1</label>
    </ligand>
</feature>
<feature type="binding site" evidence="1">
    <location>
        <position position="226"/>
    </location>
    <ligand>
        <name>Ca(2+)</name>
        <dbReference type="ChEBI" id="CHEBI:29108"/>
        <label>2</label>
    </ligand>
</feature>
<feature type="binding site" evidence="1">
    <location>
        <position position="229"/>
    </location>
    <ligand>
        <name>Ca(2+)</name>
        <dbReference type="ChEBI" id="CHEBI:29108"/>
        <label>2</label>
    </ligand>
</feature>
<feature type="binding site" evidence="1">
    <location>
        <position position="231"/>
    </location>
    <ligand>
        <name>Ca(2+)</name>
        <dbReference type="ChEBI" id="CHEBI:29108"/>
        <label>2</label>
    </ligand>
</feature>
<feature type="binding site" evidence="1">
    <location>
        <position position="249"/>
    </location>
    <ligand>
        <name>Ca(2+)</name>
        <dbReference type="ChEBI" id="CHEBI:29108"/>
        <label>1</label>
    </ligand>
</feature>
<feature type="binding site" evidence="1">
    <location>
        <position position="251"/>
    </location>
    <ligand>
        <name>Ca(2+)</name>
        <dbReference type="ChEBI" id="CHEBI:29108"/>
        <label>1</label>
    </ligand>
</feature>
<feature type="binding site" evidence="1">
    <location>
        <position position="356"/>
    </location>
    <ligand>
        <name>Ca(2+)</name>
        <dbReference type="ChEBI" id="CHEBI:29108"/>
        <label>2</label>
    </ligand>
</feature>
<feature type="binding site" evidence="1">
    <location>
        <position position="357"/>
    </location>
    <ligand>
        <name>Ca(2+)</name>
        <dbReference type="ChEBI" id="CHEBI:29108"/>
        <label>2</label>
    </ligand>
</feature>
<feature type="binding site" evidence="5">
    <location>
        <begin position="612"/>
        <end position="620"/>
    </location>
    <ligand>
        <name>ATP</name>
        <dbReference type="ChEBI" id="CHEBI:30616"/>
    </ligand>
</feature>
<feature type="binding site" evidence="5">
    <location>
        <position position="651"/>
    </location>
    <ligand>
        <name>ATP</name>
        <dbReference type="ChEBI" id="CHEBI:30616"/>
    </ligand>
</feature>
<feature type="modified residue" description="Phosphotyrosine; by autocatalysis" evidence="2">
    <location>
        <position position="480"/>
    </location>
</feature>
<feature type="modified residue" description="Phosphotyrosine; by autocatalysis" evidence="2">
    <location>
        <position position="509"/>
    </location>
</feature>
<feature type="modified residue" description="Phosphotyrosine; by autocatalysis" evidence="2">
    <location>
        <position position="516"/>
    </location>
</feature>
<feature type="modified residue" description="Phosphoserine" evidence="2">
    <location>
        <position position="627"/>
    </location>
</feature>
<feature type="modified residue" description="Phosphotyrosine; by autocatalysis" evidence="2">
    <location>
        <position position="736"/>
    </location>
</feature>
<feature type="modified residue" description="Phosphotyrosine; by autocatalysis" evidence="2">
    <location>
        <position position="788"/>
    </location>
</feature>
<feature type="modified residue" description="Phosphotyrosine; by autocatalysis" evidence="2">
    <location>
        <position position="792"/>
    </location>
</feature>
<feature type="modified residue" description="Phosphotyrosine; by autocatalysis" evidence="2">
    <location>
        <position position="793"/>
    </location>
</feature>
<feature type="glycosylation site" description="N-linked (GlcNAc...) asparagine" evidence="3">
    <location>
        <position position="207"/>
    </location>
</feature>
<feature type="glycosylation site" description="N-linked (GlcNAc...) asparagine" evidence="3">
    <location>
        <position position="256"/>
    </location>
</feature>
<feature type="glycosylation site" description="N-linked (GlcNAc...) asparagine" evidence="3">
    <location>
        <position position="366"/>
    </location>
</feature>
<feature type="glycosylation site" description="N-linked (GlcNAc...) asparagine" evidence="3">
    <location>
        <position position="390"/>
    </location>
</feature>
<feature type="disulfide bond" evidence="4">
    <location>
        <begin position="31"/>
        <end position="181"/>
    </location>
</feature>
<feature type="disulfide bond" evidence="4">
    <location>
        <begin position="70"/>
        <end position="173"/>
    </location>
</feature>
<feature type="disulfide bond" evidence="4">
    <location>
        <begin position="299"/>
        <end position="344"/>
    </location>
</feature>
<comment type="function">
    <text evidence="1">Tyrosine kinase that functions as a cell surface receptor for fibrillar collagen and regulates cell attachment to the extracellular matrix, remodeling of the extracellular matrix, cell migration, differentiation, survival and cell proliferation. Collagen binding triggers a signaling pathway that involves SRC and leads to the activation of MAP kinases. Regulates remodeling of the extracellular matrix by up-regulation of the matrix metalloproteinases MMP2, MMP7 and MMP9, and thereby facilitates cell migration and wound healing. Promotes smooth muscle cell migration, and thereby contributes to arterial wound healing. Also plays a role in tumor cell invasion. Phosphorylates PTPN11. Required for normal blastocyst implantation during pregnancy, for normal mammary gland differentiation and normal lactation. Required for normal ear morphology and normal hearing (By similarity).</text>
</comment>
<comment type="catalytic activity">
    <reaction evidence="6">
        <text>L-tyrosyl-[protein] + ATP = O-phospho-L-tyrosyl-[protein] + ADP + H(+)</text>
        <dbReference type="Rhea" id="RHEA:10596"/>
        <dbReference type="Rhea" id="RHEA-COMP:10136"/>
        <dbReference type="Rhea" id="RHEA-COMP:20101"/>
        <dbReference type="ChEBI" id="CHEBI:15378"/>
        <dbReference type="ChEBI" id="CHEBI:30616"/>
        <dbReference type="ChEBI" id="CHEBI:46858"/>
        <dbReference type="ChEBI" id="CHEBI:61978"/>
        <dbReference type="ChEBI" id="CHEBI:456216"/>
        <dbReference type="EC" id="2.7.10.1"/>
    </reaction>
</comment>
<comment type="subunit">
    <text evidence="1">Homodimer. Interacts (via PPxY motif) with WWC1 (via WW domains) in a collagen-regulated manner. Forms a tripartite complex with WWC1 and PRKCZ, but predominantly in the absence of collagen. Interacts (tyrosine phosphorylated) with SHC1. Interacts with SRC. Interacts with MYH9. Interacts with CDH1. Interacts with PTPN11. Interacts with NCK2 (By similarity).</text>
</comment>
<comment type="subcellular location">
    <subcellularLocation>
        <location evidence="1">Cell membrane</location>
        <topology evidence="1">Single-pass type I membrane protein</topology>
    </subcellularLocation>
</comment>
<comment type="domain">
    <text>The Gly/Pro-rich domains may be required for an unusual geometry of interaction with ligand or substrates.</text>
</comment>
<comment type="PTM">
    <text evidence="1">Autophosphorylated in response to fibrillar collagen binding.</text>
</comment>
<comment type="similarity">
    <text evidence="5">Belongs to the protein kinase superfamily. Tyr protein kinase family. Insulin receptor subfamily.</text>
</comment>
<protein>
    <recommendedName>
        <fullName>Epithelial discoidin domain-containing receptor 1</fullName>
        <shortName>Epithelial discoidin domain receptor 1</shortName>
        <ecNumber>2.7.10.1</ecNumber>
    </recommendedName>
    <alternativeName>
        <fullName>CD167 antigen-like family member A</fullName>
    </alternativeName>
    <alternativeName>
        <fullName>Discoidin receptor tyrosine kinase</fullName>
    </alternativeName>
    <alternativeName>
        <fullName>Tyrosine kinase DDR</fullName>
    </alternativeName>
    <cdAntigenName>CD167a</cdAntigenName>
</protein>
<evidence type="ECO:0000250" key="1"/>
<evidence type="ECO:0000250" key="2">
    <source>
        <dbReference type="UniProtKB" id="Q08345"/>
    </source>
</evidence>
<evidence type="ECO:0000255" key="3"/>
<evidence type="ECO:0000255" key="4">
    <source>
        <dbReference type="PROSITE-ProRule" id="PRU00081"/>
    </source>
</evidence>
<evidence type="ECO:0000255" key="5">
    <source>
        <dbReference type="PROSITE-ProRule" id="PRU00159"/>
    </source>
</evidence>
<evidence type="ECO:0000255" key="6">
    <source>
        <dbReference type="PROSITE-ProRule" id="PRU10028"/>
    </source>
</evidence>
<evidence type="ECO:0000256" key="7">
    <source>
        <dbReference type="SAM" id="MobiDB-lite"/>
    </source>
</evidence>
<name>DDR1_PANTR</name>
<organism>
    <name type="scientific">Pan troglodytes</name>
    <name type="common">Chimpanzee</name>
    <dbReference type="NCBI Taxonomy" id="9598"/>
    <lineage>
        <taxon>Eukaryota</taxon>
        <taxon>Metazoa</taxon>
        <taxon>Chordata</taxon>
        <taxon>Craniata</taxon>
        <taxon>Vertebrata</taxon>
        <taxon>Euteleostomi</taxon>
        <taxon>Mammalia</taxon>
        <taxon>Eutheria</taxon>
        <taxon>Euarchontoglires</taxon>
        <taxon>Primates</taxon>
        <taxon>Haplorrhini</taxon>
        <taxon>Catarrhini</taxon>
        <taxon>Hominidae</taxon>
        <taxon>Pan</taxon>
    </lineage>
</organism>